<feature type="signal peptide" evidence="2">
    <location>
        <begin position="1"/>
        <end position="20"/>
    </location>
</feature>
<feature type="chain" id="PRO_0000018790" description="Beta-2-microglobulin">
    <location>
        <begin position="21"/>
        <end position="119"/>
    </location>
</feature>
<feature type="domain" description="Ig-like C1-type">
    <location>
        <begin position="25"/>
        <end position="114"/>
    </location>
</feature>
<feature type="disulfide bond">
    <location>
        <begin position="45"/>
        <end position="100"/>
    </location>
</feature>
<feature type="strand" evidence="5">
    <location>
        <begin position="26"/>
        <end position="33"/>
    </location>
</feature>
<feature type="strand" evidence="4">
    <location>
        <begin position="37"/>
        <end position="39"/>
    </location>
</feature>
<feature type="strand" evidence="5">
    <location>
        <begin position="41"/>
        <end position="53"/>
    </location>
</feature>
<feature type="strand" evidence="5">
    <location>
        <begin position="56"/>
        <end position="61"/>
    </location>
</feature>
<feature type="strand" evidence="5">
    <location>
        <begin position="82"/>
        <end position="90"/>
    </location>
</feature>
<feature type="strand" evidence="5">
    <location>
        <begin position="98"/>
        <end position="103"/>
    </location>
</feature>
<feature type="strand" evidence="5">
    <location>
        <begin position="111"/>
        <end position="114"/>
    </location>
</feature>
<accession>P07151</accession>
<sequence>MARSVTVIFLVLVSLAVVLAIQKTPQIQVYSRHPPENGKPNFLNCYVSQFHPPQIEIELLKNGKKIPNIEMSDLSFSKDWSFYILAHTEFTPTETDVYACRVKHVTLKEPKTVTWDRDM</sequence>
<proteinExistence type="evidence at protein level"/>
<comment type="function">
    <text>Component of the class I major histocompatibility complex (MHC). Involved in the presentation of peptide antigens to the immune system.</text>
</comment>
<comment type="subunit">
    <text evidence="1">Heterodimer of an alpha chain and a beta chain. Beta-2-microglobulin is the beta-chain of major histocompatibility complex class I molecules. Forms a heterotrimer with MR1 and a metabolite antigen.</text>
</comment>
<comment type="subcellular location">
    <subcellularLocation>
        <location>Secreted</location>
    </subcellularLocation>
</comment>
<comment type="similarity">
    <text evidence="3">Belongs to the beta-2-microglobulin family.</text>
</comment>
<reference key="1">
    <citation type="journal article" date="1987" name="Nucleic Acids Res.">
        <title>Nucleotide sequence of rat beta 2-microglobulin cDNA.</title>
        <authorList>
            <person name="Mauxion F."/>
            <person name="Kress M."/>
        </authorList>
    </citation>
    <scope>NUCLEOTIDE SEQUENCE [MRNA]</scope>
    <source>
        <strain>Wistar</strain>
    </source>
</reference>
<reference key="2">
    <citation type="submission" date="1996-10" db="EMBL/GenBank/DDBJ databases">
        <authorList>
            <person name="le Rolle A.F."/>
            <person name="Butcher G.W."/>
            <person name="Joly E."/>
        </authorList>
    </citation>
    <scope>NUCLEOTIDE SEQUENCE [MRNA]</scope>
    <source>
        <strain>RT10 stock</strain>
        <tissue>Splenocyte</tissue>
    </source>
</reference>
<reference key="3">
    <citation type="journal article" date="1989" name="Nature">
        <title>An Fc receptor structurally related to MHC class I antigens.</title>
        <authorList>
            <person name="Simister N.E."/>
            <person name="Mostov K.E."/>
        </authorList>
    </citation>
    <scope>PROTEIN SEQUENCE OF 21-39</scope>
    <source>
        <strain>Wistar</strain>
    </source>
</reference>
<reference key="4">
    <citation type="journal article" date="1989" name="Eur. J. Biochem.">
        <title>The cDNA structure and expression analysis of the genes for the cysteine proteinase inhibitor cystatin C and for beta 2-microglobulin in rat brain.</title>
        <authorList>
            <person name="Cole T."/>
            <person name="Dickson P.W."/>
            <person name="Esnard F."/>
            <person name="Averill F."/>
            <person name="Risbridger G."/>
            <person name="Gauthier F."/>
            <person name="Schreiber G."/>
        </authorList>
    </citation>
    <scope>NUCLEOTIDE SEQUENCE [MRNA] OF 65-119</scope>
    <source>
        <strain>Sprague-Dawley</strain>
        <tissue>Liver</tissue>
    </source>
</reference>
<reference key="5">
    <citation type="journal article" date="1994" name="Nature">
        <title>Crystal structure of the complex of rat neonatal Fc receptor with Fc.</title>
        <authorList>
            <person name="Burmeister W.P."/>
            <person name="Huber A.H."/>
            <person name="Bjorkman P.J."/>
        </authorList>
    </citation>
    <scope>X-RAY CRYSTALLOGRAPHY (2.2 ANGSTROMS)</scope>
</reference>
<reference key="6">
    <citation type="journal article" date="1998" name="Structure">
        <title>Structural basis of pH-dependent antibody binding by the neonatal Fc receptor.</title>
        <authorList>
            <person name="Vaughn D.E."/>
            <person name="Bjorkman P.J."/>
        </authorList>
    </citation>
    <scope>X-RAY CRYSTALLOGRAPHY (2.2 ANGSTROMS)</scope>
</reference>
<reference key="7">
    <citation type="journal article" date="2001" name="Immunity">
        <title>Two different, highly exposed, bulged structures for an unusually long peptide bound to rat MHC class I RT1-A(a).</title>
        <authorList>
            <person name="Speir J.A."/>
            <person name="Stevens J."/>
            <person name="Joly E."/>
            <person name="Butcher G.W."/>
            <person name="Wilson I.A."/>
        </authorList>
    </citation>
    <scope>X-RAY CRYSTALLOGRAPHY (2.55 ANGSTROMS)</scope>
</reference>
<keyword id="KW-0002">3D-structure</keyword>
<keyword id="KW-0903">Direct protein sequencing</keyword>
<keyword id="KW-1015">Disulfide bond</keyword>
<keyword id="KW-0391">Immunity</keyword>
<keyword id="KW-0393">Immunoglobulin domain</keyword>
<keyword id="KW-0490">MHC I</keyword>
<keyword id="KW-1185">Reference proteome</keyword>
<keyword id="KW-0964">Secreted</keyword>
<keyword id="KW-0732">Signal</keyword>
<dbReference type="EMBL" id="Y00441">
    <property type="protein sequence ID" value="CAA68498.1"/>
    <property type="molecule type" value="mRNA"/>
</dbReference>
<dbReference type="EMBL" id="Y08531">
    <property type="protein sequence ID" value="CAA69847.1"/>
    <property type="molecule type" value="mRNA"/>
</dbReference>
<dbReference type="EMBL" id="X16956">
    <property type="protein sequence ID" value="CAA34830.1"/>
    <property type="molecule type" value="mRNA"/>
</dbReference>
<dbReference type="PIR" id="A26842">
    <property type="entry name" value="A26842"/>
</dbReference>
<dbReference type="RefSeq" id="NP_036644.1">
    <property type="nucleotide sequence ID" value="NM_012512.2"/>
</dbReference>
<dbReference type="RefSeq" id="XP_063139144.1">
    <property type="nucleotide sequence ID" value="XM_063283074.1"/>
</dbReference>
<dbReference type="PDB" id="1ED3">
    <property type="method" value="X-ray"/>
    <property type="resolution" value="2.55 A"/>
    <property type="chains" value="B/E=21-119"/>
</dbReference>
<dbReference type="PDB" id="1FRT">
    <property type="method" value="X-ray"/>
    <property type="resolution" value="4.50 A"/>
    <property type="chains" value="B=21-119"/>
</dbReference>
<dbReference type="PDB" id="1I1A">
    <property type="method" value="X-ray"/>
    <property type="resolution" value="2.80 A"/>
    <property type="chains" value="B=21-119"/>
</dbReference>
<dbReference type="PDB" id="1KJM">
    <property type="method" value="X-ray"/>
    <property type="resolution" value="2.35 A"/>
    <property type="chains" value="B=21-119"/>
</dbReference>
<dbReference type="PDB" id="1KJV">
    <property type="method" value="X-ray"/>
    <property type="resolution" value="1.48 A"/>
    <property type="chains" value="B=21-119"/>
</dbReference>
<dbReference type="PDB" id="3FRU">
    <property type="method" value="X-ray"/>
    <property type="resolution" value="2.20 A"/>
    <property type="chains" value="B/D/F=21-119"/>
</dbReference>
<dbReference type="PDB" id="6NF7">
    <property type="method" value="X-ray"/>
    <property type="resolution" value="2.90 A"/>
    <property type="chains" value="B/E/H/K/N=21-119"/>
</dbReference>
<dbReference type="PDBsum" id="1ED3"/>
<dbReference type="PDBsum" id="1FRT"/>
<dbReference type="PDBsum" id="1I1A"/>
<dbReference type="PDBsum" id="1KJM"/>
<dbReference type="PDBsum" id="1KJV"/>
<dbReference type="PDBsum" id="3FRU"/>
<dbReference type="PDBsum" id="6NF7"/>
<dbReference type="SMR" id="P07151"/>
<dbReference type="BioGRID" id="246411">
    <property type="interactions" value="2"/>
</dbReference>
<dbReference type="FunCoup" id="P07151">
    <property type="interactions" value="788"/>
</dbReference>
<dbReference type="IntAct" id="P07151">
    <property type="interactions" value="3"/>
</dbReference>
<dbReference type="MINT" id="P07151"/>
<dbReference type="STRING" id="10116.ENSRNOP00000023017"/>
<dbReference type="iPTMnet" id="P07151"/>
<dbReference type="PhosphoSitePlus" id="P07151"/>
<dbReference type="PaxDb" id="10116-ENSRNOP00000023017"/>
<dbReference type="Ensembl" id="ENSRNOT00000023017.6">
    <property type="protein sequence ID" value="ENSRNOP00000023017.4"/>
    <property type="gene ID" value="ENSRNOG00000017123.6"/>
</dbReference>
<dbReference type="GeneID" id="24223"/>
<dbReference type="KEGG" id="rno:24223"/>
<dbReference type="UCSC" id="RGD:2189">
    <property type="organism name" value="rat"/>
</dbReference>
<dbReference type="AGR" id="RGD:2189"/>
<dbReference type="CTD" id="567"/>
<dbReference type="RGD" id="2189">
    <property type="gene designation" value="B2m"/>
</dbReference>
<dbReference type="eggNOG" id="ENOG502S8GM">
    <property type="taxonomic scope" value="Eukaryota"/>
</dbReference>
<dbReference type="GeneTree" id="ENSGT00690000102227"/>
<dbReference type="HOGENOM" id="CLU_163066_0_0_1"/>
<dbReference type="InParanoid" id="P07151"/>
<dbReference type="OMA" id="EDVFSCR"/>
<dbReference type="OrthoDB" id="67688at9989"/>
<dbReference type="PhylomeDB" id="P07151"/>
<dbReference type="TreeFam" id="TF334167"/>
<dbReference type="Reactome" id="R-RNO-1236974">
    <property type="pathway name" value="ER-Phagosome pathway"/>
</dbReference>
<dbReference type="Reactome" id="R-RNO-1236977">
    <property type="pathway name" value="Endosomal/Vacuolar pathway"/>
</dbReference>
<dbReference type="Reactome" id="R-RNO-198933">
    <property type="pathway name" value="Immunoregulatory interactions between a Lymphoid and a non-Lymphoid cell"/>
</dbReference>
<dbReference type="Reactome" id="R-RNO-2172127">
    <property type="pathway name" value="DAP12 interactions"/>
</dbReference>
<dbReference type="Reactome" id="R-RNO-2424491">
    <property type="pathway name" value="DAP12 signaling"/>
</dbReference>
<dbReference type="Reactome" id="R-RNO-6798695">
    <property type="pathway name" value="Neutrophil degranulation"/>
</dbReference>
<dbReference type="Reactome" id="R-RNO-983170">
    <property type="pathway name" value="Antigen Presentation: Folding, assembly and peptide loading of class I MHC"/>
</dbReference>
<dbReference type="EvolutionaryTrace" id="P07151"/>
<dbReference type="PRO" id="PR:P07151"/>
<dbReference type="Proteomes" id="UP000002494">
    <property type="component" value="Chromosome 3"/>
</dbReference>
<dbReference type="Bgee" id="ENSRNOG00000017123">
    <property type="expression patterns" value="Expressed in lung and 19 other cell types or tissues"/>
</dbReference>
<dbReference type="GO" id="GO:0009897">
    <property type="term" value="C:external side of plasma membrane"/>
    <property type="evidence" value="ECO:0000266"/>
    <property type="project" value="RGD"/>
</dbReference>
<dbReference type="GO" id="GO:0005615">
    <property type="term" value="C:extracellular space"/>
    <property type="evidence" value="ECO:0000314"/>
    <property type="project" value="RGD"/>
</dbReference>
<dbReference type="GO" id="GO:1990712">
    <property type="term" value="C:HFE-transferrin receptor complex"/>
    <property type="evidence" value="ECO:0000266"/>
    <property type="project" value="RGD"/>
</dbReference>
<dbReference type="GO" id="GO:0031902">
    <property type="term" value="C:late endosome membrane"/>
    <property type="evidence" value="ECO:0000318"/>
    <property type="project" value="GO_Central"/>
</dbReference>
<dbReference type="GO" id="GO:0005765">
    <property type="term" value="C:lysosomal membrane"/>
    <property type="evidence" value="ECO:0000318"/>
    <property type="project" value="GO_Central"/>
</dbReference>
<dbReference type="GO" id="GO:0042824">
    <property type="term" value="C:MHC class I peptide loading complex"/>
    <property type="evidence" value="ECO:0000266"/>
    <property type="project" value="RGD"/>
</dbReference>
<dbReference type="GO" id="GO:0042612">
    <property type="term" value="C:MHC class I protein complex"/>
    <property type="evidence" value="ECO:0007669"/>
    <property type="project" value="UniProtKB-KW"/>
</dbReference>
<dbReference type="GO" id="GO:0042613">
    <property type="term" value="C:MHC class II protein complex"/>
    <property type="evidence" value="ECO:0000318"/>
    <property type="project" value="GO_Central"/>
</dbReference>
<dbReference type="GO" id="GO:0042802">
    <property type="term" value="F:identical protein binding"/>
    <property type="evidence" value="ECO:0000266"/>
    <property type="project" value="RGD"/>
</dbReference>
<dbReference type="GO" id="GO:0023026">
    <property type="term" value="F:MHC class II protein complex binding"/>
    <property type="evidence" value="ECO:0000318"/>
    <property type="project" value="GO_Central"/>
</dbReference>
<dbReference type="GO" id="GO:0042605">
    <property type="term" value="F:peptide antigen binding"/>
    <property type="evidence" value="ECO:0000318"/>
    <property type="project" value="GO_Central"/>
</dbReference>
<dbReference type="GO" id="GO:0042803">
    <property type="term" value="F:protein homodimerization activity"/>
    <property type="evidence" value="ECO:0000266"/>
    <property type="project" value="RGD"/>
</dbReference>
<dbReference type="GO" id="GO:0005198">
    <property type="term" value="F:structural molecule activity"/>
    <property type="evidence" value="ECO:0000266"/>
    <property type="project" value="RGD"/>
</dbReference>
<dbReference type="GO" id="GO:1990000">
    <property type="term" value="P:amyloid fibril formation"/>
    <property type="evidence" value="ECO:0000266"/>
    <property type="project" value="RGD"/>
</dbReference>
<dbReference type="GO" id="GO:0019885">
    <property type="term" value="P:antigen processing and presentation of endogenous peptide antigen via MHC class I"/>
    <property type="evidence" value="ECO:0000266"/>
    <property type="project" value="RGD"/>
</dbReference>
<dbReference type="GO" id="GO:0019886">
    <property type="term" value="P:antigen processing and presentation of exogenous peptide antigen via MHC class II"/>
    <property type="evidence" value="ECO:0000318"/>
    <property type="project" value="GO_Central"/>
</dbReference>
<dbReference type="GO" id="GO:0002481">
    <property type="term" value="P:antigen processing and presentation of exogenous protein antigen via MHC class Ib, TAP-dependent"/>
    <property type="evidence" value="ECO:0000266"/>
    <property type="project" value="RGD"/>
</dbReference>
<dbReference type="GO" id="GO:0071281">
    <property type="term" value="P:cellular response to iron ion"/>
    <property type="evidence" value="ECO:0000266"/>
    <property type="project" value="RGD"/>
</dbReference>
<dbReference type="GO" id="GO:0071283">
    <property type="term" value="P:cellular response to iron(III) ion"/>
    <property type="evidence" value="ECO:0000266"/>
    <property type="project" value="RGD"/>
</dbReference>
<dbReference type="GO" id="GO:0071316">
    <property type="term" value="P:cellular response to nicotine"/>
    <property type="evidence" value="ECO:0000266"/>
    <property type="project" value="RGD"/>
</dbReference>
<dbReference type="GO" id="GO:0006879">
    <property type="term" value="P:intracellular iron ion homeostasis"/>
    <property type="evidence" value="ECO:0000266"/>
    <property type="project" value="RGD"/>
</dbReference>
<dbReference type="GO" id="GO:0006826">
    <property type="term" value="P:iron ion transport"/>
    <property type="evidence" value="ECO:0000266"/>
    <property type="project" value="RGD"/>
</dbReference>
<dbReference type="GO" id="GO:0007611">
    <property type="term" value="P:learning or memory"/>
    <property type="evidence" value="ECO:0000266"/>
    <property type="project" value="RGD"/>
</dbReference>
<dbReference type="GO" id="GO:0060586">
    <property type="term" value="P:multicellular organismal-level iron ion homeostasis"/>
    <property type="evidence" value="ECO:0000266"/>
    <property type="project" value="RGD"/>
</dbReference>
<dbReference type="GO" id="GO:0050680">
    <property type="term" value="P:negative regulation of epithelial cell proliferation"/>
    <property type="evidence" value="ECO:0000266"/>
    <property type="project" value="RGD"/>
</dbReference>
<dbReference type="GO" id="GO:2000978">
    <property type="term" value="P:negative regulation of forebrain neuron differentiation"/>
    <property type="evidence" value="ECO:0000266"/>
    <property type="project" value="RGD"/>
</dbReference>
<dbReference type="GO" id="GO:0050768">
    <property type="term" value="P:negative regulation of neurogenesis"/>
    <property type="evidence" value="ECO:0000266"/>
    <property type="project" value="RGD"/>
</dbReference>
<dbReference type="GO" id="GO:0010977">
    <property type="term" value="P:negative regulation of neuron projection development"/>
    <property type="evidence" value="ECO:0000266"/>
    <property type="project" value="RGD"/>
</dbReference>
<dbReference type="GO" id="GO:0002502">
    <property type="term" value="P:peptide antigen assembly with MHC class I protein complex"/>
    <property type="evidence" value="ECO:0000266"/>
    <property type="project" value="RGD"/>
</dbReference>
<dbReference type="GO" id="GO:0002503">
    <property type="term" value="P:peptide antigen assembly with MHC class II protein complex"/>
    <property type="evidence" value="ECO:0000318"/>
    <property type="project" value="GO_Central"/>
</dbReference>
<dbReference type="GO" id="GO:2000774">
    <property type="term" value="P:positive regulation of cellular senescence"/>
    <property type="evidence" value="ECO:0000266"/>
    <property type="project" value="RGD"/>
</dbReference>
<dbReference type="GO" id="GO:0050778">
    <property type="term" value="P:positive regulation of immune response"/>
    <property type="evidence" value="ECO:0000318"/>
    <property type="project" value="GO_Central"/>
</dbReference>
<dbReference type="GO" id="GO:0048260">
    <property type="term" value="P:positive regulation of receptor-mediated endocytosis"/>
    <property type="evidence" value="ECO:0000266"/>
    <property type="project" value="RGD"/>
</dbReference>
<dbReference type="GO" id="GO:0050870">
    <property type="term" value="P:positive regulation of T cell activation"/>
    <property type="evidence" value="ECO:0000318"/>
    <property type="project" value="GO_Central"/>
</dbReference>
<dbReference type="GO" id="GO:0002726">
    <property type="term" value="P:positive regulation of T cell cytokine production"/>
    <property type="evidence" value="ECO:0000266"/>
    <property type="project" value="RGD"/>
</dbReference>
<dbReference type="GO" id="GO:0001916">
    <property type="term" value="P:positive regulation of T cell mediated cytotoxicity"/>
    <property type="evidence" value="ECO:0000266"/>
    <property type="project" value="RGD"/>
</dbReference>
<dbReference type="GO" id="GO:0051289">
    <property type="term" value="P:protein homotetramerization"/>
    <property type="evidence" value="ECO:0000266"/>
    <property type="project" value="RGD"/>
</dbReference>
<dbReference type="GO" id="GO:0042026">
    <property type="term" value="P:protein refolding"/>
    <property type="evidence" value="ECO:0000266"/>
    <property type="project" value="RGD"/>
</dbReference>
<dbReference type="GO" id="GO:0045646">
    <property type="term" value="P:regulation of erythrocyte differentiation"/>
    <property type="evidence" value="ECO:0000266"/>
    <property type="project" value="RGD"/>
</dbReference>
<dbReference type="GO" id="GO:0034756">
    <property type="term" value="P:regulation of iron ion transport"/>
    <property type="evidence" value="ECO:0000266"/>
    <property type="project" value="RGD"/>
</dbReference>
<dbReference type="GO" id="GO:0046686">
    <property type="term" value="P:response to cadmium ion"/>
    <property type="evidence" value="ECO:0000270"/>
    <property type="project" value="RGD"/>
</dbReference>
<dbReference type="GO" id="GO:0002237">
    <property type="term" value="P:response to molecule of bacterial origin"/>
    <property type="evidence" value="ECO:0000266"/>
    <property type="project" value="RGD"/>
</dbReference>
<dbReference type="GO" id="GO:0009410">
    <property type="term" value="P:response to xenobiotic stimulus"/>
    <property type="evidence" value="ECO:0000270"/>
    <property type="project" value="RGD"/>
</dbReference>
<dbReference type="GO" id="GO:0007608">
    <property type="term" value="P:sensory perception of smell"/>
    <property type="evidence" value="ECO:0000266"/>
    <property type="project" value="RGD"/>
</dbReference>
<dbReference type="GO" id="GO:0033077">
    <property type="term" value="P:T cell differentiation in thymus"/>
    <property type="evidence" value="ECO:0000266"/>
    <property type="project" value="RGD"/>
</dbReference>
<dbReference type="GO" id="GO:0001913">
    <property type="term" value="P:T cell mediated cytotoxicity"/>
    <property type="evidence" value="ECO:0000266"/>
    <property type="project" value="RGD"/>
</dbReference>
<dbReference type="CDD" id="cd05770">
    <property type="entry name" value="IgC1_beta2m"/>
    <property type="match status" value="1"/>
</dbReference>
<dbReference type="FunFam" id="2.60.40.10:FF:001005">
    <property type="entry name" value="Beta-2-microglobulin"/>
    <property type="match status" value="1"/>
</dbReference>
<dbReference type="Gene3D" id="2.60.40.10">
    <property type="entry name" value="Immunoglobulins"/>
    <property type="match status" value="1"/>
</dbReference>
<dbReference type="InterPro" id="IPR015707">
    <property type="entry name" value="B2Microglobulin"/>
</dbReference>
<dbReference type="InterPro" id="IPR007110">
    <property type="entry name" value="Ig-like_dom"/>
</dbReference>
<dbReference type="InterPro" id="IPR036179">
    <property type="entry name" value="Ig-like_dom_sf"/>
</dbReference>
<dbReference type="InterPro" id="IPR013783">
    <property type="entry name" value="Ig-like_fold"/>
</dbReference>
<dbReference type="InterPro" id="IPR003006">
    <property type="entry name" value="Ig/MHC_CS"/>
</dbReference>
<dbReference type="InterPro" id="IPR003597">
    <property type="entry name" value="Ig_C1-set"/>
</dbReference>
<dbReference type="InterPro" id="IPR050160">
    <property type="entry name" value="MHC/Immunoglobulin"/>
</dbReference>
<dbReference type="PANTHER" id="PTHR19944:SF62">
    <property type="entry name" value="BETA-2-MICROGLOBULIN"/>
    <property type="match status" value="1"/>
</dbReference>
<dbReference type="PANTHER" id="PTHR19944">
    <property type="entry name" value="MHC CLASS II-RELATED"/>
    <property type="match status" value="1"/>
</dbReference>
<dbReference type="Pfam" id="PF07654">
    <property type="entry name" value="C1-set"/>
    <property type="match status" value="1"/>
</dbReference>
<dbReference type="SMART" id="SM00407">
    <property type="entry name" value="IGc1"/>
    <property type="match status" value="1"/>
</dbReference>
<dbReference type="SUPFAM" id="SSF48726">
    <property type="entry name" value="Immunoglobulin"/>
    <property type="match status" value="1"/>
</dbReference>
<dbReference type="PROSITE" id="PS50835">
    <property type="entry name" value="IG_LIKE"/>
    <property type="match status" value="1"/>
</dbReference>
<dbReference type="PROSITE" id="PS00290">
    <property type="entry name" value="IG_MHC"/>
    <property type="match status" value="1"/>
</dbReference>
<protein>
    <recommendedName>
        <fullName>Beta-2-microglobulin</fullName>
    </recommendedName>
</protein>
<gene>
    <name type="primary">B2m</name>
</gene>
<evidence type="ECO:0000250" key="1">
    <source>
        <dbReference type="UniProtKB" id="P61769"/>
    </source>
</evidence>
<evidence type="ECO:0000269" key="2">
    <source>
    </source>
</evidence>
<evidence type="ECO:0000305" key="3"/>
<evidence type="ECO:0007829" key="4">
    <source>
        <dbReference type="PDB" id="1KJM"/>
    </source>
</evidence>
<evidence type="ECO:0007829" key="5">
    <source>
        <dbReference type="PDB" id="1KJV"/>
    </source>
</evidence>
<organism>
    <name type="scientific">Rattus norvegicus</name>
    <name type="common">Rat</name>
    <dbReference type="NCBI Taxonomy" id="10116"/>
    <lineage>
        <taxon>Eukaryota</taxon>
        <taxon>Metazoa</taxon>
        <taxon>Chordata</taxon>
        <taxon>Craniata</taxon>
        <taxon>Vertebrata</taxon>
        <taxon>Euteleostomi</taxon>
        <taxon>Mammalia</taxon>
        <taxon>Eutheria</taxon>
        <taxon>Euarchontoglires</taxon>
        <taxon>Glires</taxon>
        <taxon>Rodentia</taxon>
        <taxon>Myomorpha</taxon>
        <taxon>Muroidea</taxon>
        <taxon>Muridae</taxon>
        <taxon>Murinae</taxon>
        <taxon>Rattus</taxon>
    </lineage>
</organism>
<name>B2MG_RAT</name>